<reference key="1">
    <citation type="journal article" date="2010" name="J. Bacteriol.">
        <title>Complete genome sequence of Beijerinckia indica subsp. indica.</title>
        <authorList>
            <person name="Tamas I."/>
            <person name="Dedysh S.N."/>
            <person name="Liesack W."/>
            <person name="Stott M.B."/>
            <person name="Alam M."/>
            <person name="Murrell J.C."/>
            <person name="Dunfield P.F."/>
        </authorList>
    </citation>
    <scope>NUCLEOTIDE SEQUENCE [LARGE SCALE GENOMIC DNA]</scope>
    <source>
        <strain>ATCC 9039 / DSM 1715 / NCIMB 8712</strain>
    </source>
</reference>
<keyword id="KW-0028">Amino-acid biosynthesis</keyword>
<keyword id="KW-0057">Aromatic amino acid biosynthesis</keyword>
<keyword id="KW-0456">Lyase</keyword>
<keyword id="KW-0663">Pyridoxal phosphate</keyword>
<keyword id="KW-1185">Reference proteome</keyword>
<keyword id="KW-0822">Tryptophan biosynthesis</keyword>
<gene>
    <name evidence="1" type="primary">trpB</name>
    <name type="ordered locus">Bind_1990</name>
</gene>
<evidence type="ECO:0000255" key="1">
    <source>
        <dbReference type="HAMAP-Rule" id="MF_00133"/>
    </source>
</evidence>
<comment type="function">
    <text evidence="1">The beta subunit is responsible for the synthesis of L-tryptophan from indole and L-serine.</text>
</comment>
<comment type="catalytic activity">
    <reaction evidence="1">
        <text>(1S,2R)-1-C-(indol-3-yl)glycerol 3-phosphate + L-serine = D-glyceraldehyde 3-phosphate + L-tryptophan + H2O</text>
        <dbReference type="Rhea" id="RHEA:10532"/>
        <dbReference type="ChEBI" id="CHEBI:15377"/>
        <dbReference type="ChEBI" id="CHEBI:33384"/>
        <dbReference type="ChEBI" id="CHEBI:57912"/>
        <dbReference type="ChEBI" id="CHEBI:58866"/>
        <dbReference type="ChEBI" id="CHEBI:59776"/>
        <dbReference type="EC" id="4.2.1.20"/>
    </reaction>
</comment>
<comment type="cofactor">
    <cofactor evidence="1">
        <name>pyridoxal 5'-phosphate</name>
        <dbReference type="ChEBI" id="CHEBI:597326"/>
    </cofactor>
</comment>
<comment type="pathway">
    <text evidence="1">Amino-acid biosynthesis; L-tryptophan biosynthesis; L-tryptophan from chorismate: step 5/5.</text>
</comment>
<comment type="subunit">
    <text evidence="1">Tetramer of two alpha and two beta chains.</text>
</comment>
<comment type="similarity">
    <text evidence="1">Belongs to the TrpB family.</text>
</comment>
<protein>
    <recommendedName>
        <fullName evidence="1">Tryptophan synthase beta chain</fullName>
        <ecNumber evidence="1">4.2.1.20</ecNumber>
    </recommendedName>
</protein>
<feature type="chain" id="PRO_1000095779" description="Tryptophan synthase beta chain">
    <location>
        <begin position="1"/>
        <end position="414"/>
    </location>
</feature>
<feature type="modified residue" description="N6-(pyridoxal phosphate)lysine" evidence="1">
    <location>
        <position position="108"/>
    </location>
</feature>
<sequence>MPHEPLNSYRSGPDERGHFGIFGGRFVAETLMPLILDLEKHYALARVDPAFKAELDGLLTHYVGRPSPLYYAERLTEHVRAIAAHAGGRGGAKVYFKREELNHTGAHKINNVLGQILLARRMGKTRIIAETGAGQHGVATATACARFGLECVIYMGAVDVERQKPNVFRMNLLGAKVVPVQSGARTLKDAMNEALRDWVTNVTDTFYCIGTAAGPHPYPAMVRDFQCVIGEETRTQMLEREGRLPDSLFACIGGGSNAIGLFHPFLDEPNVEIYGVEAAGFGLDKQHAASLAGGRPGVLHGNRTYLLMDADGQIEEGHSISAGLDYPGIGPEHAWLKETGRVTYLSARDDEALDAFQLCAKLEGIIPALEPAHALAKVVEVAPSKPRDHLLVVNISGRGDKDIFTVADYLAPVG</sequence>
<name>TRPB_BEII9</name>
<accession>B2IF48</accession>
<proteinExistence type="inferred from homology"/>
<organism>
    <name type="scientific">Beijerinckia indica subsp. indica (strain ATCC 9039 / DSM 1715 / NCIMB 8712)</name>
    <dbReference type="NCBI Taxonomy" id="395963"/>
    <lineage>
        <taxon>Bacteria</taxon>
        <taxon>Pseudomonadati</taxon>
        <taxon>Pseudomonadota</taxon>
        <taxon>Alphaproteobacteria</taxon>
        <taxon>Hyphomicrobiales</taxon>
        <taxon>Beijerinckiaceae</taxon>
        <taxon>Beijerinckia</taxon>
    </lineage>
</organism>
<dbReference type="EC" id="4.2.1.20" evidence="1"/>
<dbReference type="EMBL" id="CP001016">
    <property type="protein sequence ID" value="ACB95613.1"/>
    <property type="molecule type" value="Genomic_DNA"/>
</dbReference>
<dbReference type="RefSeq" id="WP_012384969.1">
    <property type="nucleotide sequence ID" value="NC_010581.1"/>
</dbReference>
<dbReference type="SMR" id="B2IF48"/>
<dbReference type="STRING" id="395963.Bind_1990"/>
<dbReference type="KEGG" id="bid:Bind_1990"/>
<dbReference type="eggNOG" id="COG0133">
    <property type="taxonomic scope" value="Bacteria"/>
</dbReference>
<dbReference type="HOGENOM" id="CLU_016734_3_1_5"/>
<dbReference type="OrthoDB" id="9766131at2"/>
<dbReference type="UniPathway" id="UPA00035">
    <property type="reaction ID" value="UER00044"/>
</dbReference>
<dbReference type="Proteomes" id="UP000001695">
    <property type="component" value="Chromosome"/>
</dbReference>
<dbReference type="GO" id="GO:0005737">
    <property type="term" value="C:cytoplasm"/>
    <property type="evidence" value="ECO:0007669"/>
    <property type="project" value="TreeGrafter"/>
</dbReference>
<dbReference type="GO" id="GO:0004834">
    <property type="term" value="F:tryptophan synthase activity"/>
    <property type="evidence" value="ECO:0007669"/>
    <property type="project" value="UniProtKB-UniRule"/>
</dbReference>
<dbReference type="CDD" id="cd06446">
    <property type="entry name" value="Trp-synth_B"/>
    <property type="match status" value="1"/>
</dbReference>
<dbReference type="FunFam" id="3.40.50.1100:FF:000001">
    <property type="entry name" value="Tryptophan synthase beta chain"/>
    <property type="match status" value="1"/>
</dbReference>
<dbReference type="FunFam" id="3.40.50.1100:FF:000004">
    <property type="entry name" value="Tryptophan synthase beta chain"/>
    <property type="match status" value="1"/>
</dbReference>
<dbReference type="Gene3D" id="3.40.50.1100">
    <property type="match status" value="2"/>
</dbReference>
<dbReference type="HAMAP" id="MF_00133">
    <property type="entry name" value="Trp_synth_beta"/>
    <property type="match status" value="1"/>
</dbReference>
<dbReference type="InterPro" id="IPR006653">
    <property type="entry name" value="Trp_synth_b_CS"/>
</dbReference>
<dbReference type="InterPro" id="IPR006654">
    <property type="entry name" value="Trp_synth_beta"/>
</dbReference>
<dbReference type="InterPro" id="IPR023026">
    <property type="entry name" value="Trp_synth_beta/beta-like"/>
</dbReference>
<dbReference type="InterPro" id="IPR001926">
    <property type="entry name" value="TrpB-like_PALP"/>
</dbReference>
<dbReference type="InterPro" id="IPR036052">
    <property type="entry name" value="TrpB-like_PALP_sf"/>
</dbReference>
<dbReference type="NCBIfam" id="TIGR00263">
    <property type="entry name" value="trpB"/>
    <property type="match status" value="1"/>
</dbReference>
<dbReference type="PANTHER" id="PTHR48077:SF3">
    <property type="entry name" value="TRYPTOPHAN SYNTHASE"/>
    <property type="match status" value="1"/>
</dbReference>
<dbReference type="PANTHER" id="PTHR48077">
    <property type="entry name" value="TRYPTOPHAN SYNTHASE-RELATED"/>
    <property type="match status" value="1"/>
</dbReference>
<dbReference type="Pfam" id="PF00291">
    <property type="entry name" value="PALP"/>
    <property type="match status" value="1"/>
</dbReference>
<dbReference type="PIRSF" id="PIRSF001413">
    <property type="entry name" value="Trp_syn_beta"/>
    <property type="match status" value="1"/>
</dbReference>
<dbReference type="SUPFAM" id="SSF53686">
    <property type="entry name" value="Tryptophan synthase beta subunit-like PLP-dependent enzymes"/>
    <property type="match status" value="1"/>
</dbReference>
<dbReference type="PROSITE" id="PS00168">
    <property type="entry name" value="TRP_SYNTHASE_BETA"/>
    <property type="match status" value="1"/>
</dbReference>